<organism>
    <name type="scientific">Dictyostelium discoideum</name>
    <name type="common">Social amoeba</name>
    <dbReference type="NCBI Taxonomy" id="44689"/>
    <lineage>
        <taxon>Eukaryota</taxon>
        <taxon>Amoebozoa</taxon>
        <taxon>Evosea</taxon>
        <taxon>Eumycetozoa</taxon>
        <taxon>Dictyostelia</taxon>
        <taxon>Dictyosteliales</taxon>
        <taxon>Dictyosteliaceae</taxon>
        <taxon>Dictyostelium</taxon>
    </lineage>
</organism>
<gene>
    <name type="primary">4cl2</name>
    <name type="ORF">DDB_G0284745</name>
</gene>
<accession>Q54P78</accession>
<dbReference type="EC" id="6.2.1.12" evidence="1"/>
<dbReference type="EMBL" id="AAFI02000071">
    <property type="protein sequence ID" value="EAL65025.1"/>
    <property type="molecule type" value="Genomic_DNA"/>
</dbReference>
<dbReference type="RefSeq" id="XP_638380.1">
    <property type="nucleotide sequence ID" value="XM_633288.1"/>
</dbReference>
<dbReference type="SMR" id="Q54P78"/>
<dbReference type="FunCoup" id="Q54P78">
    <property type="interactions" value="106"/>
</dbReference>
<dbReference type="STRING" id="44689.Q54P78"/>
<dbReference type="PaxDb" id="44689-DDB0231736"/>
<dbReference type="EnsemblProtists" id="EAL65025">
    <property type="protein sequence ID" value="EAL65025"/>
    <property type="gene ID" value="DDB_G0284745"/>
</dbReference>
<dbReference type="GeneID" id="8624749"/>
<dbReference type="KEGG" id="ddi:DDB_G0284745"/>
<dbReference type="dictyBase" id="DDB_G0284745">
    <property type="gene designation" value="4cl2"/>
</dbReference>
<dbReference type="VEuPathDB" id="AmoebaDB:DDB_G0284745"/>
<dbReference type="eggNOG" id="KOG1176">
    <property type="taxonomic scope" value="Eukaryota"/>
</dbReference>
<dbReference type="HOGENOM" id="CLU_000022_59_2_1"/>
<dbReference type="InParanoid" id="Q54P78"/>
<dbReference type="OMA" id="YMMRRFD"/>
<dbReference type="PhylomeDB" id="Q54P78"/>
<dbReference type="UniPathway" id="UPA00372">
    <property type="reaction ID" value="UER00547"/>
</dbReference>
<dbReference type="PRO" id="PR:Q54P78"/>
<dbReference type="Proteomes" id="UP000002195">
    <property type="component" value="Chromosome 4"/>
</dbReference>
<dbReference type="GO" id="GO:0016207">
    <property type="term" value="F:4-coumarate-CoA ligase activity"/>
    <property type="evidence" value="ECO:0007669"/>
    <property type="project" value="UniProtKB-EC"/>
</dbReference>
<dbReference type="GO" id="GO:0005524">
    <property type="term" value="F:ATP binding"/>
    <property type="evidence" value="ECO:0007669"/>
    <property type="project" value="UniProtKB-KW"/>
</dbReference>
<dbReference type="GO" id="GO:0016405">
    <property type="term" value="F:CoA-ligase activity"/>
    <property type="evidence" value="ECO:0000318"/>
    <property type="project" value="GO_Central"/>
</dbReference>
<dbReference type="GO" id="GO:0009698">
    <property type="term" value="P:phenylpropanoid metabolic process"/>
    <property type="evidence" value="ECO:0007669"/>
    <property type="project" value="UniProtKB-KW"/>
</dbReference>
<dbReference type="CDD" id="cd05911">
    <property type="entry name" value="Firefly_Luc_like"/>
    <property type="match status" value="1"/>
</dbReference>
<dbReference type="FunFam" id="3.30.300.30:FF:000007">
    <property type="entry name" value="4-coumarate--CoA ligase 2"/>
    <property type="match status" value="1"/>
</dbReference>
<dbReference type="FunFam" id="3.40.50.12780:FF:000003">
    <property type="entry name" value="Long-chain-fatty-acid--CoA ligase FadD"/>
    <property type="match status" value="1"/>
</dbReference>
<dbReference type="Gene3D" id="3.30.300.30">
    <property type="match status" value="1"/>
</dbReference>
<dbReference type="Gene3D" id="3.40.50.980">
    <property type="match status" value="2"/>
</dbReference>
<dbReference type="Gene3D" id="2.30.38.10">
    <property type="entry name" value="Luciferase, Domain 3"/>
    <property type="match status" value="1"/>
</dbReference>
<dbReference type="InterPro" id="IPR025110">
    <property type="entry name" value="AMP-bd_C"/>
</dbReference>
<dbReference type="InterPro" id="IPR045851">
    <property type="entry name" value="AMP-bd_C_sf"/>
</dbReference>
<dbReference type="InterPro" id="IPR000873">
    <property type="entry name" value="AMP-dep_synth/lig_dom"/>
</dbReference>
<dbReference type="PANTHER" id="PTHR24096:SF149">
    <property type="entry name" value="AMP-BINDING DOMAIN-CONTAINING PROTEIN-RELATED"/>
    <property type="match status" value="1"/>
</dbReference>
<dbReference type="PANTHER" id="PTHR24096">
    <property type="entry name" value="LONG-CHAIN-FATTY-ACID--COA LIGASE"/>
    <property type="match status" value="1"/>
</dbReference>
<dbReference type="Pfam" id="PF00501">
    <property type="entry name" value="AMP-binding"/>
    <property type="match status" value="1"/>
</dbReference>
<dbReference type="Pfam" id="PF13193">
    <property type="entry name" value="AMP-binding_C"/>
    <property type="match status" value="1"/>
</dbReference>
<dbReference type="SUPFAM" id="SSF56801">
    <property type="entry name" value="Acetyl-CoA synthetase-like"/>
    <property type="match status" value="1"/>
</dbReference>
<name>4CL2_DICDI</name>
<proteinExistence type="inferred from homology"/>
<comment type="function">
    <text evidence="1">Carboxylate--CoA ligase that may use 4-coumarate as substrate. Follows a two-step reaction mechanism, wherein the carboxylate substrate first undergoes adenylation by ATP, followed by a thioesterification in the presence of CoA to yield the final CoA thioester.</text>
</comment>
<comment type="catalytic activity">
    <reaction evidence="1">
        <text>(E)-4-coumarate + ATP + CoA = (E)-4-coumaroyl-CoA + AMP + diphosphate</text>
        <dbReference type="Rhea" id="RHEA:19641"/>
        <dbReference type="ChEBI" id="CHEBI:12876"/>
        <dbReference type="ChEBI" id="CHEBI:30616"/>
        <dbReference type="ChEBI" id="CHEBI:33019"/>
        <dbReference type="ChEBI" id="CHEBI:57287"/>
        <dbReference type="ChEBI" id="CHEBI:85008"/>
        <dbReference type="ChEBI" id="CHEBI:456215"/>
        <dbReference type="EC" id="6.2.1.12"/>
    </reaction>
    <physiologicalReaction direction="left-to-right" evidence="1">
        <dbReference type="Rhea" id="RHEA:19642"/>
    </physiologicalReaction>
</comment>
<comment type="catalytic activity">
    <reaction evidence="1">
        <text>(E)-4-coumarate + ATP + H(+) = (E)-4-coumaroyl-AMP + diphosphate</text>
        <dbReference type="Rhea" id="RHEA:72419"/>
        <dbReference type="ChEBI" id="CHEBI:12876"/>
        <dbReference type="ChEBI" id="CHEBI:15378"/>
        <dbReference type="ChEBI" id="CHEBI:30616"/>
        <dbReference type="ChEBI" id="CHEBI:33019"/>
        <dbReference type="ChEBI" id="CHEBI:192348"/>
    </reaction>
    <physiologicalReaction direction="left-to-right" evidence="1">
        <dbReference type="Rhea" id="RHEA:72420"/>
    </physiologicalReaction>
</comment>
<comment type="catalytic activity">
    <reaction evidence="1">
        <text>(E)-4-coumaroyl-AMP + CoA = (E)-4-coumaroyl-CoA + AMP + H(+)</text>
        <dbReference type="Rhea" id="RHEA:72423"/>
        <dbReference type="ChEBI" id="CHEBI:15378"/>
        <dbReference type="ChEBI" id="CHEBI:57287"/>
        <dbReference type="ChEBI" id="CHEBI:85008"/>
        <dbReference type="ChEBI" id="CHEBI:192348"/>
        <dbReference type="ChEBI" id="CHEBI:456215"/>
    </reaction>
    <physiologicalReaction direction="left-to-right" evidence="1">
        <dbReference type="Rhea" id="RHEA:72424"/>
    </physiologicalReaction>
</comment>
<comment type="cofactor">
    <cofactor evidence="1">
        <name>Mg(2+)</name>
        <dbReference type="ChEBI" id="CHEBI:18420"/>
    </cofactor>
</comment>
<comment type="pathway">
    <text evidence="2">Phytoalexin biosynthesis; 3,4',5-trihydroxystilbene biosynthesis; 3,4',5-trihydroxystilbene from trans-4-coumarate: step 1/2.</text>
</comment>
<comment type="domain">
    <text evidence="2">Both substrate-binding domains (SBD1 and SBD2) are involved in the substrate recognition, and are sufficient to confer the substrate specificity.</text>
</comment>
<comment type="similarity">
    <text evidence="3">Belongs to the ATP-dependent AMP-binding enzyme family.</text>
</comment>
<feature type="chain" id="PRO_0000327702" description="Probable 4-coumarate--CoA ligase 2">
    <location>
        <begin position="1"/>
        <end position="551"/>
    </location>
</feature>
<feature type="region of interest" description="SBD1" evidence="2">
    <location>
        <begin position="276"/>
        <end position="346"/>
    </location>
</feature>
<feature type="region of interest" description="SBD2" evidence="2">
    <location>
        <begin position="347"/>
        <end position="409"/>
    </location>
</feature>
<feature type="binding site" evidence="1">
    <location>
        <position position="205"/>
    </location>
    <ligand>
        <name>ATP</name>
        <dbReference type="ChEBI" id="CHEBI:30616"/>
    </ligand>
</feature>
<feature type="binding site" evidence="1">
    <location>
        <position position="206"/>
    </location>
    <ligand>
        <name>ATP</name>
        <dbReference type="ChEBI" id="CHEBI:30616"/>
    </ligand>
</feature>
<feature type="binding site" evidence="1">
    <location>
        <position position="207"/>
    </location>
    <ligand>
        <name>ATP</name>
        <dbReference type="ChEBI" id="CHEBI:30616"/>
    </ligand>
</feature>
<feature type="binding site" evidence="1">
    <location>
        <position position="208"/>
    </location>
    <ligand>
        <name>ATP</name>
        <dbReference type="ChEBI" id="CHEBI:30616"/>
    </ligand>
</feature>
<feature type="binding site" evidence="1">
    <location>
        <position position="209"/>
    </location>
    <ligand>
        <name>ATP</name>
        <dbReference type="ChEBI" id="CHEBI:30616"/>
    </ligand>
</feature>
<feature type="binding site" evidence="1">
    <location>
        <position position="213"/>
    </location>
    <ligand>
        <name>ATP</name>
        <dbReference type="ChEBI" id="CHEBI:30616"/>
    </ligand>
</feature>
<feature type="binding site" evidence="1">
    <location>
        <position position="253"/>
    </location>
    <ligand>
        <name>(E)-4-coumaroyl-AMP</name>
        <dbReference type="ChEBI" id="CHEBI:192348"/>
    </ligand>
</feature>
<feature type="binding site" evidence="1">
    <location>
        <position position="257"/>
    </location>
    <ligand>
        <name>(E)-4-coumaroyl-AMP</name>
        <dbReference type="ChEBI" id="CHEBI:192348"/>
    </ligand>
</feature>
<feature type="binding site" evidence="1">
    <location>
        <position position="274"/>
    </location>
    <ligand>
        <name>CoA</name>
        <dbReference type="ChEBI" id="CHEBI:57287"/>
    </ligand>
</feature>
<feature type="binding site" evidence="1">
    <location>
        <position position="323"/>
    </location>
    <ligand>
        <name>(E)-4-coumaroyl-AMP</name>
        <dbReference type="ChEBI" id="CHEBI:192348"/>
    </ligand>
</feature>
<feature type="binding site" evidence="1">
    <location>
        <position position="346"/>
    </location>
    <ligand>
        <name>(E)-4-coumaroyl-AMP</name>
        <dbReference type="ChEBI" id="CHEBI:192348"/>
    </ligand>
</feature>
<feature type="binding site" evidence="1">
    <location>
        <position position="346"/>
    </location>
    <ligand>
        <name>ATP</name>
        <dbReference type="ChEBI" id="CHEBI:30616"/>
    </ligand>
</feature>
<feature type="binding site" evidence="1">
    <location>
        <position position="347"/>
    </location>
    <ligand>
        <name>(E)-4-coumaroyl-AMP</name>
        <dbReference type="ChEBI" id="CHEBI:192348"/>
    </ligand>
</feature>
<feature type="binding site" evidence="1">
    <location>
        <position position="347"/>
    </location>
    <ligand>
        <name>ATP</name>
        <dbReference type="ChEBI" id="CHEBI:30616"/>
    </ligand>
</feature>
<feature type="binding site" evidence="1">
    <location>
        <position position="351"/>
    </location>
    <ligand>
        <name>(E)-4-coumaroyl-AMP</name>
        <dbReference type="ChEBI" id="CHEBI:192348"/>
    </ligand>
</feature>
<feature type="binding site" evidence="1">
    <location>
        <position position="351"/>
    </location>
    <ligand>
        <name>ATP</name>
        <dbReference type="ChEBI" id="CHEBI:30616"/>
    </ligand>
</feature>
<feature type="binding site" evidence="1">
    <location>
        <position position="430"/>
    </location>
    <ligand>
        <name>ATP</name>
        <dbReference type="ChEBI" id="CHEBI:30616"/>
    </ligand>
</feature>
<feature type="binding site" evidence="1">
    <location>
        <position position="445"/>
    </location>
    <ligand>
        <name>ATP</name>
        <dbReference type="ChEBI" id="CHEBI:30616"/>
    </ligand>
</feature>
<feature type="binding site" evidence="1">
    <location>
        <position position="447"/>
    </location>
    <ligand>
        <name>(E)-4-coumaroyl-AMP</name>
        <dbReference type="ChEBI" id="CHEBI:192348"/>
    </ligand>
</feature>
<feature type="binding site" evidence="1">
    <location>
        <position position="451"/>
    </location>
    <ligand>
        <name>(E)-4-coumaroyl-AMP</name>
        <dbReference type="ChEBI" id="CHEBI:192348"/>
    </ligand>
</feature>
<feature type="binding site" evidence="1">
    <location>
        <position position="453"/>
    </location>
    <ligand>
        <name>CoA</name>
        <dbReference type="ChEBI" id="CHEBI:57287"/>
    </ligand>
</feature>
<feature type="binding site" evidence="1">
    <location>
        <position position="454"/>
    </location>
    <ligand>
        <name>CoA</name>
        <dbReference type="ChEBI" id="CHEBI:57287"/>
    </ligand>
</feature>
<feature type="binding site" evidence="1">
    <location>
        <position position="537"/>
    </location>
    <ligand>
        <name>ATP</name>
        <dbReference type="ChEBI" id="CHEBI:30616"/>
    </ligand>
</feature>
<evidence type="ECO:0000250" key="1">
    <source>
        <dbReference type="UniProtKB" id="O24146"/>
    </source>
</evidence>
<evidence type="ECO:0000250" key="2">
    <source>
        <dbReference type="UniProtKB" id="Q42524"/>
    </source>
</evidence>
<evidence type="ECO:0000305" key="3"/>
<reference key="1">
    <citation type="journal article" date="2005" name="Nature">
        <title>The genome of the social amoeba Dictyostelium discoideum.</title>
        <authorList>
            <person name="Eichinger L."/>
            <person name="Pachebat J.A."/>
            <person name="Gloeckner G."/>
            <person name="Rajandream M.A."/>
            <person name="Sucgang R."/>
            <person name="Berriman M."/>
            <person name="Song J."/>
            <person name="Olsen R."/>
            <person name="Szafranski K."/>
            <person name="Xu Q."/>
            <person name="Tunggal B."/>
            <person name="Kummerfeld S."/>
            <person name="Madera M."/>
            <person name="Konfortov B.A."/>
            <person name="Rivero F."/>
            <person name="Bankier A.T."/>
            <person name="Lehmann R."/>
            <person name="Hamlin N."/>
            <person name="Davies R."/>
            <person name="Gaudet P."/>
            <person name="Fey P."/>
            <person name="Pilcher K."/>
            <person name="Chen G."/>
            <person name="Saunders D."/>
            <person name="Sodergren E.J."/>
            <person name="Davis P."/>
            <person name="Kerhornou A."/>
            <person name="Nie X."/>
            <person name="Hall N."/>
            <person name="Anjard C."/>
            <person name="Hemphill L."/>
            <person name="Bason N."/>
            <person name="Farbrother P."/>
            <person name="Desany B."/>
            <person name="Just E."/>
            <person name="Morio T."/>
            <person name="Rost R."/>
            <person name="Churcher C.M."/>
            <person name="Cooper J."/>
            <person name="Haydock S."/>
            <person name="van Driessche N."/>
            <person name="Cronin A."/>
            <person name="Goodhead I."/>
            <person name="Muzny D.M."/>
            <person name="Mourier T."/>
            <person name="Pain A."/>
            <person name="Lu M."/>
            <person name="Harper D."/>
            <person name="Lindsay R."/>
            <person name="Hauser H."/>
            <person name="James K.D."/>
            <person name="Quiles M."/>
            <person name="Madan Babu M."/>
            <person name="Saito T."/>
            <person name="Buchrieser C."/>
            <person name="Wardroper A."/>
            <person name="Felder M."/>
            <person name="Thangavelu M."/>
            <person name="Johnson D."/>
            <person name="Knights A."/>
            <person name="Loulseged H."/>
            <person name="Mungall K.L."/>
            <person name="Oliver K."/>
            <person name="Price C."/>
            <person name="Quail M.A."/>
            <person name="Urushihara H."/>
            <person name="Hernandez J."/>
            <person name="Rabbinowitsch E."/>
            <person name="Steffen D."/>
            <person name="Sanders M."/>
            <person name="Ma J."/>
            <person name="Kohara Y."/>
            <person name="Sharp S."/>
            <person name="Simmonds M.N."/>
            <person name="Spiegler S."/>
            <person name="Tivey A."/>
            <person name="Sugano S."/>
            <person name="White B."/>
            <person name="Walker D."/>
            <person name="Woodward J.R."/>
            <person name="Winckler T."/>
            <person name="Tanaka Y."/>
            <person name="Shaulsky G."/>
            <person name="Schleicher M."/>
            <person name="Weinstock G.M."/>
            <person name="Rosenthal A."/>
            <person name="Cox E.C."/>
            <person name="Chisholm R.L."/>
            <person name="Gibbs R.A."/>
            <person name="Loomis W.F."/>
            <person name="Platzer M."/>
            <person name="Kay R.R."/>
            <person name="Williams J.G."/>
            <person name="Dear P.H."/>
            <person name="Noegel A.A."/>
            <person name="Barrell B.G."/>
            <person name="Kuspa A."/>
        </authorList>
    </citation>
    <scope>NUCLEOTIDE SEQUENCE [LARGE SCALE GENOMIC DNA]</scope>
    <source>
        <strain>AX4</strain>
    </source>
</reference>
<keyword id="KW-0067">ATP-binding</keyword>
<keyword id="KW-0436">Ligase</keyword>
<keyword id="KW-0460">Magnesium</keyword>
<keyword id="KW-0547">Nucleotide-binding</keyword>
<keyword id="KW-0587">Phenylpropanoid metabolism</keyword>
<keyword id="KW-1185">Reference proteome</keyword>
<protein>
    <recommendedName>
        <fullName>Probable 4-coumarate--CoA ligase 2</fullName>
        <shortName>4CL 2</shortName>
        <ecNumber evidence="1">6.2.1.12</ecNumber>
    </recommendedName>
    <alternativeName>
        <fullName>4-coumaroyl-CoA synthase 2</fullName>
    </alternativeName>
</protein>
<sequence length="551" mass="61149">MIRMIKGQIYFTSKYPNIIIPEKPIPHLILKHIRSKPDQVLLVDGLTFKEYSSHFVADTIEKVACGLNKLNIKKGDVLGVILPNLPEYVPIFHGTLLMGGITSLVNPDYTIEELSHTLATVSPRYLAVTLAVYEKIKNDLKRVFPSVEKVILVDIAGQTLKEIGQLTLSSDGIVMSFNQLINNNGKDYPIVRIDLKKDTAIIPFSSGTTGLFKGVCLSHHNLVSNTHQTQTVETTNYKKNDTVMGQLPFFHIYGLMTYLILMVKQGHCVVILPKFEFVRFLDLIQKYKVAISFIVPPIAIMFAKSPIVDKFDLSSLRTLFSGAAPLSREVEDLIKERFKGKLIIKQGYGATELSPACFVIPSGLIKSGSAGILLPNQLVKIISPETGENLGMGEKGEICIKGPNVMLGYYNNEKATNEVIDKDGFFKTGDIGYVDEDGYYFIVDRSKELIKCKGFQVPPAELEALLLSHPKVADACVVGLSKGDMGEVPRGFVVIKQNESLTEKELLDWAHPKIANYKHFRGGIFFIPAIPKSATGKLLRKNLKDINPPKL</sequence>